<keyword id="KW-0121">Carboxypeptidase</keyword>
<keyword id="KW-1015">Disulfide bond</keyword>
<keyword id="KW-0272">Extracellular matrix</keyword>
<keyword id="KW-0325">Glycoprotein</keyword>
<keyword id="KW-0378">Hydrolase</keyword>
<keyword id="KW-0479">Metal-binding</keyword>
<keyword id="KW-0482">Metalloprotease</keyword>
<keyword id="KW-0645">Protease</keyword>
<keyword id="KW-1185">Reference proteome</keyword>
<keyword id="KW-0964">Secreted</keyword>
<keyword id="KW-0732">Signal</keyword>
<keyword id="KW-0879">Wnt signaling pathway</keyword>
<keyword id="KW-0862">Zinc</keyword>
<sequence length="654" mass="73721">MPTMPLLLAALAALAVLALAARPSPSCSPGPDPSGKCQRLVYTHSATCVDLHLRTCADAAYNHTSFPTPLEHRSWEAVESSPEYMLLGVIHFLLEGQCNPDLRLLGCSVLAPRCEGGHTQRPCRHVCEGLREACQPAFDAIDMAWPYFLDCAQYFAPEEEGCYDPLEELRGELDVEEALPSGLPPTFIRFAHHSYAQMVRVLKRTAARCSQVAKTYSIGRSFEGKDLVVIEFSSRPGQHELMEPEVKLIGNIHGNEVAGREVLIYLAQYLCSEYLLGNPRIQRLLNTTRIHLLPSMNPDGYEVAAAEGAGYNGWTSGRQNAQNLDLNRNFPDLTSEYYRLASTRGVRTDHIPISQYYWWGKVAPETKAIMKWIQTIPFVLSASLHGGDLVVSYPFDFSKNPHEKKMFSPTPDEKMFKLLARAYADVHPMMMDRSENRCGGNFLKRGSIINGADWYSFTGGMSDFNYLHTNCFEITVELGCVKFPPEEALYGLWQQNKEPLLNFLEMVHRGIKGMVTDKYGKPVKNARILVKGIRHDVTTAPDGDYWRLLPPGSHIVIAQAPGYSKVMKRVTIPLRMKKAGRVDFILHPLATGPKNFLPGPSRALPRFQDPQREPTQMDFEPPRARRQPASGSKPWWWAYFTSLSPYKPRWLLKY</sequence>
<accession>Q8R4V4</accession>
<accession>G3X945</accession>
<evidence type="ECO:0000250" key="1"/>
<evidence type="ECO:0000250" key="2">
    <source>
        <dbReference type="UniProtKB" id="P00730"/>
    </source>
</evidence>
<evidence type="ECO:0000255" key="3"/>
<evidence type="ECO:0000255" key="4">
    <source>
        <dbReference type="PROSITE-ProRule" id="PRU00090"/>
    </source>
</evidence>
<evidence type="ECO:0000255" key="5">
    <source>
        <dbReference type="PROSITE-ProRule" id="PRU01379"/>
    </source>
</evidence>
<evidence type="ECO:0000256" key="6">
    <source>
        <dbReference type="SAM" id="MobiDB-lite"/>
    </source>
</evidence>
<evidence type="ECO:0000305" key="7"/>
<dbReference type="EC" id="3.4.17.-"/>
<dbReference type="EMBL" id="AF356844">
    <property type="protein sequence ID" value="AAM00219.1"/>
    <property type="molecule type" value="mRNA"/>
</dbReference>
<dbReference type="EMBL" id="AC116705">
    <property type="status" value="NOT_ANNOTATED_CDS"/>
    <property type="molecule type" value="Genomic_DNA"/>
</dbReference>
<dbReference type="EMBL" id="CH466524">
    <property type="protein sequence ID" value="EDL37485.1"/>
    <property type="molecule type" value="Genomic_DNA"/>
</dbReference>
<dbReference type="CCDS" id="CCDS19229.1"/>
<dbReference type="RefSeq" id="NP_694747.2">
    <property type="nucleotide sequence ID" value="NM_153107.2"/>
</dbReference>
<dbReference type="SMR" id="Q8R4V4"/>
<dbReference type="BioGRID" id="232475">
    <property type="interactions" value="23"/>
</dbReference>
<dbReference type="FunCoup" id="Q8R4V4">
    <property type="interactions" value="90"/>
</dbReference>
<dbReference type="STRING" id="10090.ENSMUSP00000039804"/>
<dbReference type="MEROPS" id="M14.012"/>
<dbReference type="GlyCosmos" id="Q8R4V4">
    <property type="glycosylation" value="2 sites, No reported glycans"/>
</dbReference>
<dbReference type="GlyGen" id="Q8R4V4">
    <property type="glycosylation" value="3 sites"/>
</dbReference>
<dbReference type="PhosphoSitePlus" id="Q8R4V4"/>
<dbReference type="SwissPalm" id="Q8R4V4"/>
<dbReference type="jPOST" id="Q8R4V4"/>
<dbReference type="PaxDb" id="10090-ENSMUSP00000039804"/>
<dbReference type="ProteomicsDB" id="281410"/>
<dbReference type="Antibodypedia" id="22804">
    <property type="antibodies" value="66 antibodies from 23 providers"/>
</dbReference>
<dbReference type="DNASU" id="242939"/>
<dbReference type="Ensembl" id="ENSMUST00000038676.7">
    <property type="protein sequence ID" value="ENSMUSP00000039804.6"/>
    <property type="gene ID" value="ENSMUSG00000036596.7"/>
</dbReference>
<dbReference type="GeneID" id="242939"/>
<dbReference type="KEGG" id="mmu:242939"/>
<dbReference type="UCSC" id="uc008xdt.1">
    <property type="organism name" value="mouse"/>
</dbReference>
<dbReference type="AGR" id="MGI:88487"/>
<dbReference type="CTD" id="8532"/>
<dbReference type="MGI" id="MGI:88487">
    <property type="gene designation" value="Cpz"/>
</dbReference>
<dbReference type="VEuPathDB" id="HostDB:ENSMUSG00000036596"/>
<dbReference type="eggNOG" id="KOG2649">
    <property type="taxonomic scope" value="Eukaryota"/>
</dbReference>
<dbReference type="GeneTree" id="ENSGT00940000156391"/>
<dbReference type="HOGENOM" id="CLU_006722_5_1_1"/>
<dbReference type="InParanoid" id="Q8R4V4"/>
<dbReference type="OMA" id="DCGRYFA"/>
<dbReference type="OrthoDB" id="10249045at2759"/>
<dbReference type="PhylomeDB" id="Q8R4V4"/>
<dbReference type="TreeFam" id="TF315592"/>
<dbReference type="BioGRID-ORCS" id="242939">
    <property type="hits" value="2 hits in 78 CRISPR screens"/>
</dbReference>
<dbReference type="PRO" id="PR:Q8R4V4"/>
<dbReference type="Proteomes" id="UP000000589">
    <property type="component" value="Chromosome 5"/>
</dbReference>
<dbReference type="RNAct" id="Q8R4V4">
    <property type="molecule type" value="protein"/>
</dbReference>
<dbReference type="Bgee" id="ENSMUSG00000036596">
    <property type="expression patterns" value="Expressed in diaphysis of femur and 96 other cell types or tissues"/>
</dbReference>
<dbReference type="ExpressionAtlas" id="Q8R4V4">
    <property type="expression patterns" value="baseline and differential"/>
</dbReference>
<dbReference type="GO" id="GO:0031012">
    <property type="term" value="C:extracellular matrix"/>
    <property type="evidence" value="ECO:0000304"/>
    <property type="project" value="MGI"/>
</dbReference>
<dbReference type="GO" id="GO:0005576">
    <property type="term" value="C:extracellular region"/>
    <property type="evidence" value="ECO:0007669"/>
    <property type="project" value="UniProtKB-KW"/>
</dbReference>
<dbReference type="GO" id="GO:0004181">
    <property type="term" value="F:metallocarboxypeptidase activity"/>
    <property type="evidence" value="ECO:0000304"/>
    <property type="project" value="MGI"/>
</dbReference>
<dbReference type="GO" id="GO:0008270">
    <property type="term" value="F:zinc ion binding"/>
    <property type="evidence" value="ECO:0007669"/>
    <property type="project" value="InterPro"/>
</dbReference>
<dbReference type="GO" id="GO:0016485">
    <property type="term" value="P:protein processing"/>
    <property type="evidence" value="ECO:0000304"/>
    <property type="project" value="MGI"/>
</dbReference>
<dbReference type="GO" id="GO:0016055">
    <property type="term" value="P:Wnt signaling pathway"/>
    <property type="evidence" value="ECO:0007669"/>
    <property type="project" value="UniProtKB-KW"/>
</dbReference>
<dbReference type="CDD" id="cd03867">
    <property type="entry name" value="M14_CPZ"/>
    <property type="match status" value="1"/>
</dbReference>
<dbReference type="CDD" id="cd11308">
    <property type="entry name" value="Peptidase_M14NE-CP-C_like"/>
    <property type="match status" value="1"/>
</dbReference>
<dbReference type="FunFam" id="1.10.2000.10:FF:000012">
    <property type="entry name" value="Carboxypeptidase Z"/>
    <property type="match status" value="1"/>
</dbReference>
<dbReference type="FunFam" id="2.60.40.1120:FF:000010">
    <property type="entry name" value="Carboxypeptidase Z"/>
    <property type="match status" value="1"/>
</dbReference>
<dbReference type="FunFam" id="3.40.630.10:FF:000022">
    <property type="entry name" value="Carboxypeptidase Z"/>
    <property type="match status" value="1"/>
</dbReference>
<dbReference type="Gene3D" id="2.60.40.1120">
    <property type="entry name" value="Carboxypeptidase-like, regulatory domain"/>
    <property type="match status" value="1"/>
</dbReference>
<dbReference type="Gene3D" id="1.10.2000.10">
    <property type="entry name" value="Frizzled cysteine-rich domain"/>
    <property type="match status" value="1"/>
</dbReference>
<dbReference type="Gene3D" id="3.40.630.10">
    <property type="entry name" value="Zn peptidases"/>
    <property type="match status" value="1"/>
</dbReference>
<dbReference type="InterPro" id="IPR008969">
    <property type="entry name" value="CarboxyPept-like_regulatory"/>
</dbReference>
<dbReference type="InterPro" id="IPR020067">
    <property type="entry name" value="Frizzled_dom"/>
</dbReference>
<dbReference type="InterPro" id="IPR036790">
    <property type="entry name" value="Frizzled_dom_sf"/>
</dbReference>
<dbReference type="InterPro" id="IPR034239">
    <property type="entry name" value="M14_CPZ_CPD"/>
</dbReference>
<dbReference type="InterPro" id="IPR000834">
    <property type="entry name" value="Peptidase_M14"/>
</dbReference>
<dbReference type="InterPro" id="IPR050753">
    <property type="entry name" value="Peptidase_M14_domain"/>
</dbReference>
<dbReference type="PANTHER" id="PTHR11532:SF63">
    <property type="entry name" value="CARBOXYPEPTIDASE Z"/>
    <property type="match status" value="1"/>
</dbReference>
<dbReference type="PANTHER" id="PTHR11532">
    <property type="entry name" value="PROTEASE M14 CARBOXYPEPTIDASE"/>
    <property type="match status" value="1"/>
</dbReference>
<dbReference type="Pfam" id="PF13620">
    <property type="entry name" value="CarboxypepD_reg"/>
    <property type="match status" value="1"/>
</dbReference>
<dbReference type="Pfam" id="PF01392">
    <property type="entry name" value="Fz"/>
    <property type="match status" value="1"/>
</dbReference>
<dbReference type="Pfam" id="PF00246">
    <property type="entry name" value="Peptidase_M14"/>
    <property type="match status" value="1"/>
</dbReference>
<dbReference type="PRINTS" id="PR00765">
    <property type="entry name" value="CRBOXYPTASEA"/>
</dbReference>
<dbReference type="SMART" id="SM00063">
    <property type="entry name" value="FRI"/>
    <property type="match status" value="1"/>
</dbReference>
<dbReference type="SMART" id="SM00631">
    <property type="entry name" value="Zn_pept"/>
    <property type="match status" value="1"/>
</dbReference>
<dbReference type="SUPFAM" id="SSF49464">
    <property type="entry name" value="Carboxypeptidase regulatory domain-like"/>
    <property type="match status" value="1"/>
</dbReference>
<dbReference type="SUPFAM" id="SSF63501">
    <property type="entry name" value="Frizzled cysteine-rich domain"/>
    <property type="match status" value="1"/>
</dbReference>
<dbReference type="SUPFAM" id="SSF53187">
    <property type="entry name" value="Zn-dependent exopeptidases"/>
    <property type="match status" value="1"/>
</dbReference>
<dbReference type="PROSITE" id="PS00133">
    <property type="entry name" value="CARBOXYPEPT_ZN_2"/>
    <property type="match status" value="1"/>
</dbReference>
<dbReference type="PROSITE" id="PS50038">
    <property type="entry name" value="FZ"/>
    <property type="match status" value="1"/>
</dbReference>
<dbReference type="PROSITE" id="PS52035">
    <property type="entry name" value="PEPTIDASE_M14"/>
    <property type="match status" value="1"/>
</dbReference>
<reference key="1">
    <citation type="journal article" date="2003" name="Development">
        <title>Carboxypeptidase Z (CPZ) modulates Wnt signaling and regulates the development of skeletal elements in the chicken.</title>
        <authorList>
            <person name="Moeller C."/>
            <person name="Swindell E.C."/>
            <person name="Kispert A."/>
            <person name="Eichele G."/>
        </authorList>
    </citation>
    <scope>NUCLEOTIDE SEQUENCE [MRNA]</scope>
    <source>
        <strain>NMRI</strain>
    </source>
</reference>
<reference key="2">
    <citation type="journal article" date="2009" name="PLoS Biol.">
        <title>Lineage-specific biology revealed by a finished genome assembly of the mouse.</title>
        <authorList>
            <person name="Church D.M."/>
            <person name="Goodstadt L."/>
            <person name="Hillier L.W."/>
            <person name="Zody M.C."/>
            <person name="Goldstein S."/>
            <person name="She X."/>
            <person name="Bult C.J."/>
            <person name="Agarwala R."/>
            <person name="Cherry J.L."/>
            <person name="DiCuccio M."/>
            <person name="Hlavina W."/>
            <person name="Kapustin Y."/>
            <person name="Meric P."/>
            <person name="Maglott D."/>
            <person name="Birtle Z."/>
            <person name="Marques A.C."/>
            <person name="Graves T."/>
            <person name="Zhou S."/>
            <person name="Teague B."/>
            <person name="Potamousis K."/>
            <person name="Churas C."/>
            <person name="Place M."/>
            <person name="Herschleb J."/>
            <person name="Runnheim R."/>
            <person name="Forrest D."/>
            <person name="Amos-Landgraf J."/>
            <person name="Schwartz D.C."/>
            <person name="Cheng Z."/>
            <person name="Lindblad-Toh K."/>
            <person name="Eichler E.E."/>
            <person name="Ponting C.P."/>
        </authorList>
    </citation>
    <scope>NUCLEOTIDE SEQUENCE [LARGE SCALE GENOMIC DNA]</scope>
    <source>
        <strain>C57BL/6J</strain>
    </source>
</reference>
<reference key="3">
    <citation type="submission" date="2005-07" db="EMBL/GenBank/DDBJ databases">
        <authorList>
            <person name="Mural R.J."/>
            <person name="Adams M.D."/>
            <person name="Myers E.W."/>
            <person name="Smith H.O."/>
            <person name="Venter J.C."/>
        </authorList>
    </citation>
    <scope>NUCLEOTIDE SEQUENCE [LARGE SCALE GENOMIC DNA]</scope>
</reference>
<protein>
    <recommendedName>
        <fullName>Carboxypeptidase Z</fullName>
        <shortName>CPZ</shortName>
        <ecNumber>3.4.17.-</ecNumber>
    </recommendedName>
</protein>
<organism>
    <name type="scientific">Mus musculus</name>
    <name type="common">Mouse</name>
    <dbReference type="NCBI Taxonomy" id="10090"/>
    <lineage>
        <taxon>Eukaryota</taxon>
        <taxon>Metazoa</taxon>
        <taxon>Chordata</taxon>
        <taxon>Craniata</taxon>
        <taxon>Vertebrata</taxon>
        <taxon>Euteleostomi</taxon>
        <taxon>Mammalia</taxon>
        <taxon>Eutheria</taxon>
        <taxon>Euarchontoglires</taxon>
        <taxon>Glires</taxon>
        <taxon>Rodentia</taxon>
        <taxon>Myomorpha</taxon>
        <taxon>Muroidea</taxon>
        <taxon>Muridae</taxon>
        <taxon>Murinae</taxon>
        <taxon>Mus</taxon>
        <taxon>Mus</taxon>
    </lineage>
</organism>
<comment type="function">
    <text evidence="1">Cleaves substrates with C-terminal arginine residues. Probably modulates the Wnt signaling pathway, by cleaving some undefined protein. May play a role in cleavage during prohormone processing (By similarity).</text>
</comment>
<comment type="cofactor">
    <cofactor evidence="2">
        <name>Zn(2+)</name>
        <dbReference type="ChEBI" id="CHEBI:29105"/>
    </cofactor>
</comment>
<comment type="activity regulation">
    <text evidence="1">Inhibited by 2-mercaptomethyl-3-guanidinoethylthiopropanoic acid (MGTA) and guanidinoethylmercaptosuccinic acid (GEMSA). Inhibited by chelating agents such as EDTA and EGTA (By similarity).</text>
</comment>
<comment type="subcellular location">
    <subcellularLocation>
        <location evidence="1">Secreted</location>
        <location evidence="1">Extracellular space</location>
        <location evidence="1">Extracellular matrix</location>
    </subcellularLocation>
</comment>
<comment type="similarity">
    <text evidence="7">Belongs to the peptidase M14 family.</text>
</comment>
<gene>
    <name type="primary">Cpz</name>
</gene>
<name>CBPZ_MOUSE</name>
<feature type="signal peptide" evidence="3">
    <location>
        <begin position="1"/>
        <end position="20"/>
    </location>
</feature>
<feature type="chain" id="PRO_0000252457" description="Carboxypeptidase Z">
    <location>
        <begin position="21"/>
        <end position="654"/>
    </location>
</feature>
<feature type="domain" description="FZ" evidence="4">
    <location>
        <begin position="43"/>
        <end position="165"/>
    </location>
</feature>
<feature type="domain" description="Peptidase M14" evidence="5">
    <location>
        <begin position="191"/>
        <end position="507"/>
    </location>
</feature>
<feature type="region of interest" description="Disordered" evidence="6">
    <location>
        <begin position="596"/>
        <end position="630"/>
    </location>
</feature>
<feature type="active site" description="Proton donor/acceptor" evidence="5">
    <location>
        <position position="477"/>
    </location>
</feature>
<feature type="binding site" evidence="5">
    <location>
        <position position="253"/>
    </location>
    <ligand>
        <name>Zn(2+)</name>
        <dbReference type="ChEBI" id="CHEBI:29105"/>
        <note>catalytic</note>
    </ligand>
</feature>
<feature type="binding site" evidence="5">
    <location>
        <position position="256"/>
    </location>
    <ligand>
        <name>Zn(2+)</name>
        <dbReference type="ChEBI" id="CHEBI:29105"/>
        <note>catalytic</note>
    </ligand>
</feature>
<feature type="binding site" evidence="5">
    <location>
        <position position="385"/>
    </location>
    <ligand>
        <name>Zn(2+)</name>
        <dbReference type="ChEBI" id="CHEBI:29105"/>
        <note>catalytic</note>
    </ligand>
</feature>
<feature type="glycosylation site" description="N-linked (GlcNAc...) asparagine" evidence="3">
    <location>
        <position position="62"/>
    </location>
</feature>
<feature type="glycosylation site" description="N-linked (GlcNAc...) asparagine" evidence="3">
    <location>
        <position position="286"/>
    </location>
</feature>
<feature type="disulfide bond" evidence="4">
    <location>
        <begin position="48"/>
        <end position="114"/>
    </location>
</feature>
<feature type="disulfide bond" evidence="4">
    <location>
        <begin position="56"/>
        <end position="107"/>
    </location>
</feature>
<feature type="disulfide bond" evidence="4">
    <location>
        <begin position="98"/>
        <end position="134"/>
    </location>
</feature>
<feature type="disulfide bond" evidence="4">
    <location>
        <begin position="123"/>
        <end position="162"/>
    </location>
</feature>
<feature type="disulfide bond" evidence="4">
    <location>
        <begin position="127"/>
        <end position="151"/>
    </location>
</feature>
<feature type="sequence conflict" description="In Ref. 1; AAM00219." evidence="7" ref="1">
    <original>P</original>
    <variation>A</variation>
    <location>
        <position position="180"/>
    </location>
</feature>
<proteinExistence type="evidence at transcript level"/>